<dbReference type="EMBL" id="BC043638">
    <property type="protein sequence ID" value="AAH43638.1"/>
    <property type="molecule type" value="mRNA"/>
</dbReference>
<dbReference type="RefSeq" id="NP_001080422.1">
    <property type="nucleotide sequence ID" value="NM_001086953.1"/>
</dbReference>
<dbReference type="SMR" id="Q7ZTQ5"/>
<dbReference type="BioGRID" id="98356">
    <property type="interactions" value="1"/>
</dbReference>
<dbReference type="IntAct" id="Q7ZTQ5">
    <property type="interactions" value="1"/>
</dbReference>
<dbReference type="DNASU" id="380114"/>
<dbReference type="GeneID" id="380114"/>
<dbReference type="KEGG" id="xla:380114"/>
<dbReference type="AGR" id="Xenbase:XB-GENE-1004715"/>
<dbReference type="CTD" id="380114"/>
<dbReference type="Xenbase" id="XB-GENE-1004715">
    <property type="gene designation" value="fxr1.S"/>
</dbReference>
<dbReference type="OrthoDB" id="424249at2759"/>
<dbReference type="Proteomes" id="UP000186698">
    <property type="component" value="Chromosome 5S"/>
</dbReference>
<dbReference type="Bgee" id="380114">
    <property type="expression patterns" value="Expressed in muscle tissue and 19 other cell types or tissues"/>
</dbReference>
<dbReference type="GO" id="GO:0005737">
    <property type="term" value="C:cytoplasm"/>
    <property type="evidence" value="ECO:0000250"/>
    <property type="project" value="UniProtKB"/>
</dbReference>
<dbReference type="GO" id="GO:0010494">
    <property type="term" value="C:cytoplasmic stress granule"/>
    <property type="evidence" value="ECO:0000318"/>
    <property type="project" value="GO_Central"/>
</dbReference>
<dbReference type="GO" id="GO:0043232">
    <property type="term" value="C:intracellular membraneless organelle"/>
    <property type="evidence" value="ECO:0000250"/>
    <property type="project" value="UniProtKB"/>
</dbReference>
<dbReference type="GO" id="GO:0043005">
    <property type="term" value="C:neuron projection"/>
    <property type="evidence" value="ECO:0000318"/>
    <property type="project" value="GO_Central"/>
</dbReference>
<dbReference type="GO" id="GO:0005634">
    <property type="term" value="C:nucleus"/>
    <property type="evidence" value="ECO:0000250"/>
    <property type="project" value="UniProtKB"/>
</dbReference>
<dbReference type="GO" id="GO:0098793">
    <property type="term" value="C:presynapse"/>
    <property type="evidence" value="ECO:0007669"/>
    <property type="project" value="GOC"/>
</dbReference>
<dbReference type="GO" id="GO:0140693">
    <property type="term" value="F:molecular condensate scaffold activity"/>
    <property type="evidence" value="ECO:0000250"/>
    <property type="project" value="UniProtKB"/>
</dbReference>
<dbReference type="GO" id="GO:0035925">
    <property type="term" value="F:mRNA 3'-UTR AU-rich region binding"/>
    <property type="evidence" value="ECO:0000250"/>
    <property type="project" value="UniProtKB"/>
</dbReference>
<dbReference type="GO" id="GO:0003730">
    <property type="term" value="F:mRNA 3'-UTR binding"/>
    <property type="evidence" value="ECO:0000318"/>
    <property type="project" value="GO_Central"/>
</dbReference>
<dbReference type="GO" id="GO:0003729">
    <property type="term" value="F:mRNA binding"/>
    <property type="evidence" value="ECO:0000250"/>
    <property type="project" value="UniProtKB"/>
</dbReference>
<dbReference type="GO" id="GO:0046982">
    <property type="term" value="F:protein heterodimerization activity"/>
    <property type="evidence" value="ECO:0000250"/>
    <property type="project" value="UniProtKB"/>
</dbReference>
<dbReference type="GO" id="GO:0042803">
    <property type="term" value="F:protein homodimerization activity"/>
    <property type="evidence" value="ECO:0000250"/>
    <property type="project" value="UniProtKB"/>
</dbReference>
<dbReference type="GO" id="GO:0003723">
    <property type="term" value="F:RNA binding"/>
    <property type="evidence" value="ECO:0000250"/>
    <property type="project" value="UniProtKB"/>
</dbReference>
<dbReference type="GO" id="GO:0033592">
    <property type="term" value="F:RNA strand annealing activity"/>
    <property type="evidence" value="ECO:0000250"/>
    <property type="project" value="UniProtKB"/>
</dbReference>
<dbReference type="GO" id="GO:0045182">
    <property type="term" value="F:translation regulator activity"/>
    <property type="evidence" value="ECO:0000318"/>
    <property type="project" value="GO_Central"/>
</dbReference>
<dbReference type="GO" id="GO:0048513">
    <property type="term" value="P:animal organ development"/>
    <property type="evidence" value="ECO:0000318"/>
    <property type="project" value="GO_Central"/>
</dbReference>
<dbReference type="GO" id="GO:0021542">
    <property type="term" value="P:dentate gyrus development"/>
    <property type="evidence" value="ECO:0000250"/>
    <property type="project" value="UniProtKB"/>
</dbReference>
<dbReference type="GO" id="GO:0140694">
    <property type="term" value="P:membraneless organelle assembly"/>
    <property type="evidence" value="ECO:0000250"/>
    <property type="project" value="UniProtKB"/>
</dbReference>
<dbReference type="GO" id="GO:0061157">
    <property type="term" value="P:mRNA destabilization"/>
    <property type="evidence" value="ECO:0000250"/>
    <property type="project" value="UniProtKB"/>
</dbReference>
<dbReference type="GO" id="GO:0051028">
    <property type="term" value="P:mRNA transport"/>
    <property type="evidence" value="ECO:0000318"/>
    <property type="project" value="GO_Central"/>
</dbReference>
<dbReference type="GO" id="GO:0007517">
    <property type="term" value="P:muscle organ development"/>
    <property type="evidence" value="ECO:0000250"/>
    <property type="project" value="UniProtKB"/>
</dbReference>
<dbReference type="GO" id="GO:0061061">
    <property type="term" value="P:muscle structure development"/>
    <property type="evidence" value="ECO:0000315"/>
    <property type="project" value="Xenbase"/>
</dbReference>
<dbReference type="GO" id="GO:0050728">
    <property type="term" value="P:negative regulation of inflammatory response"/>
    <property type="evidence" value="ECO:0000250"/>
    <property type="project" value="UniProtKB"/>
</dbReference>
<dbReference type="GO" id="GO:1900272">
    <property type="term" value="P:negative regulation of long-term synaptic potentiation"/>
    <property type="evidence" value="ECO:0000250"/>
    <property type="project" value="UniProtKB"/>
</dbReference>
<dbReference type="GO" id="GO:0017148">
    <property type="term" value="P:negative regulation of translation"/>
    <property type="evidence" value="ECO:0000250"/>
    <property type="project" value="UniProtKB"/>
</dbReference>
<dbReference type="GO" id="GO:0032720">
    <property type="term" value="P:negative regulation of tumor necrosis factor production"/>
    <property type="evidence" value="ECO:0000250"/>
    <property type="project" value="UniProtKB"/>
</dbReference>
<dbReference type="GO" id="GO:0048170">
    <property type="term" value="P:positive regulation of long-term neuronal synaptic plasticity"/>
    <property type="evidence" value="ECO:0000318"/>
    <property type="project" value="GO_Central"/>
</dbReference>
<dbReference type="GO" id="GO:2000637">
    <property type="term" value="P:positive regulation of miRNA-mediated gene silencing"/>
    <property type="evidence" value="ECO:0000250"/>
    <property type="project" value="UniProtKB"/>
</dbReference>
<dbReference type="GO" id="GO:0045727">
    <property type="term" value="P:positive regulation of translation"/>
    <property type="evidence" value="ECO:0000250"/>
    <property type="project" value="UniProtKB"/>
</dbReference>
<dbReference type="GO" id="GO:0010608">
    <property type="term" value="P:post-transcriptional regulation of gene expression"/>
    <property type="evidence" value="ECO:0000250"/>
    <property type="project" value="UniProtKB"/>
</dbReference>
<dbReference type="GO" id="GO:0043488">
    <property type="term" value="P:regulation of mRNA stability"/>
    <property type="evidence" value="ECO:0000318"/>
    <property type="project" value="GO_Central"/>
</dbReference>
<dbReference type="GO" id="GO:0050767">
    <property type="term" value="P:regulation of neurogenesis"/>
    <property type="evidence" value="ECO:0000250"/>
    <property type="project" value="UniProtKB"/>
</dbReference>
<dbReference type="GO" id="GO:0051966">
    <property type="term" value="P:regulation of synaptic transmission, glutamatergic"/>
    <property type="evidence" value="ECO:0000250"/>
    <property type="project" value="UniProtKB"/>
</dbReference>
<dbReference type="GO" id="GO:0099577">
    <property type="term" value="P:regulation of translation at presynapse, modulating synaptic transmission"/>
    <property type="evidence" value="ECO:0000318"/>
    <property type="project" value="GO_Central"/>
</dbReference>
<dbReference type="GO" id="GO:0061053">
    <property type="term" value="P:somite development"/>
    <property type="evidence" value="ECO:0000315"/>
    <property type="project" value="Xenbase"/>
</dbReference>
<dbReference type="GO" id="GO:0007286">
    <property type="term" value="P:spermatid development"/>
    <property type="evidence" value="ECO:0000250"/>
    <property type="project" value="UniProtKB"/>
</dbReference>
<dbReference type="CDD" id="cd22504">
    <property type="entry name" value="KH_I_FXR1_rpt1"/>
    <property type="match status" value="1"/>
</dbReference>
<dbReference type="CDD" id="cd22507">
    <property type="entry name" value="KH_I_FXR1_rpt2"/>
    <property type="match status" value="1"/>
</dbReference>
<dbReference type="CDD" id="cd22510">
    <property type="entry name" value="KH_I_FXR1_rpt3"/>
    <property type="match status" value="1"/>
</dbReference>
<dbReference type="CDD" id="cd20472">
    <property type="entry name" value="Tudor_Agenet_FXR1_rpt1"/>
    <property type="match status" value="1"/>
</dbReference>
<dbReference type="CDD" id="cd20475">
    <property type="entry name" value="Tudor_Agenet_FXR1_rpt2"/>
    <property type="match status" value="1"/>
</dbReference>
<dbReference type="FunFam" id="2.30.30.140:FF:000001">
    <property type="entry name" value="Fragile X mental retardation 1, isoform CRA_e"/>
    <property type="match status" value="1"/>
</dbReference>
<dbReference type="FunFam" id="2.30.30.140:FF:000002">
    <property type="entry name" value="Fragile X mental retardation 1, isoform CRA_e"/>
    <property type="match status" value="1"/>
</dbReference>
<dbReference type="FunFam" id="3.30.1370.10:FF:000004">
    <property type="entry name" value="Fragile X mental retardation 1, isoform CRA_e"/>
    <property type="match status" value="1"/>
</dbReference>
<dbReference type="FunFam" id="3.30.1370.10:FF:000017">
    <property type="entry name" value="Fragile X mental retardation syndrome-related protein 1"/>
    <property type="match status" value="1"/>
</dbReference>
<dbReference type="Gene3D" id="2.30.30.140">
    <property type="match status" value="2"/>
</dbReference>
<dbReference type="Gene3D" id="3.30.1370.10">
    <property type="entry name" value="K Homology domain, type 1"/>
    <property type="match status" value="2"/>
</dbReference>
<dbReference type="InterPro" id="IPR008395">
    <property type="entry name" value="Agenet-like_dom"/>
</dbReference>
<dbReference type="InterPro" id="IPR040148">
    <property type="entry name" value="FMR1"/>
</dbReference>
<dbReference type="InterPro" id="IPR022034">
    <property type="entry name" value="FMR1-like_C_core"/>
</dbReference>
<dbReference type="InterPro" id="IPR040472">
    <property type="entry name" value="FMRP_KH0"/>
</dbReference>
<dbReference type="InterPro" id="IPR032172">
    <property type="entry name" value="FXR1_C1"/>
</dbReference>
<dbReference type="InterPro" id="IPR032177">
    <property type="entry name" value="FXR_C3"/>
</dbReference>
<dbReference type="InterPro" id="IPR004087">
    <property type="entry name" value="KH_dom"/>
</dbReference>
<dbReference type="InterPro" id="IPR004088">
    <property type="entry name" value="KH_dom_type_1"/>
</dbReference>
<dbReference type="InterPro" id="IPR036612">
    <property type="entry name" value="KH_dom_type_1_sf"/>
</dbReference>
<dbReference type="InterPro" id="IPR047494">
    <property type="entry name" value="KH_I_FXR1_rpt1"/>
</dbReference>
<dbReference type="InterPro" id="IPR047495">
    <property type="entry name" value="KH_I_FXR1_rpt2"/>
</dbReference>
<dbReference type="InterPro" id="IPR047496">
    <property type="entry name" value="KH_I_FXR1_rpt3"/>
</dbReference>
<dbReference type="InterPro" id="IPR047425">
    <property type="entry name" value="Tudor_Agenet_FXR1_rpt1"/>
</dbReference>
<dbReference type="InterPro" id="IPR047427">
    <property type="entry name" value="Tudor_Agenet_FXR1_rpt2"/>
</dbReference>
<dbReference type="InterPro" id="IPR041560">
    <property type="entry name" value="Tudor_FRM1"/>
</dbReference>
<dbReference type="PANTHER" id="PTHR10603">
    <property type="entry name" value="FRAGILE X MENTAL RETARDATION SYNDROME-RELATED PROTEIN"/>
    <property type="match status" value="1"/>
</dbReference>
<dbReference type="PANTHER" id="PTHR10603:SF6">
    <property type="entry name" value="RNA-BINDING PROTEIN FXR1"/>
    <property type="match status" value="1"/>
</dbReference>
<dbReference type="Pfam" id="PF05641">
    <property type="entry name" value="Agenet"/>
    <property type="match status" value="1"/>
</dbReference>
<dbReference type="Pfam" id="PF12235">
    <property type="entry name" value="FXMRP1_C_core"/>
    <property type="match status" value="1"/>
</dbReference>
<dbReference type="Pfam" id="PF16096">
    <property type="entry name" value="FXR_C1"/>
    <property type="match status" value="1"/>
</dbReference>
<dbReference type="Pfam" id="PF16097">
    <property type="entry name" value="FXR_C3"/>
    <property type="match status" value="1"/>
</dbReference>
<dbReference type="Pfam" id="PF00013">
    <property type="entry name" value="KH_1"/>
    <property type="match status" value="2"/>
</dbReference>
<dbReference type="Pfam" id="PF17904">
    <property type="entry name" value="KH_9"/>
    <property type="match status" value="1"/>
</dbReference>
<dbReference type="Pfam" id="PF18336">
    <property type="entry name" value="Tudor_FRX1"/>
    <property type="match status" value="1"/>
</dbReference>
<dbReference type="SMART" id="SM00322">
    <property type="entry name" value="KH"/>
    <property type="match status" value="2"/>
</dbReference>
<dbReference type="SUPFAM" id="SSF54791">
    <property type="entry name" value="Eukaryotic type KH-domain (KH-domain type I)"/>
    <property type="match status" value="2"/>
</dbReference>
<dbReference type="PROSITE" id="PS51641">
    <property type="entry name" value="AGENET_LIKE"/>
    <property type="match status" value="2"/>
</dbReference>
<dbReference type="PROSITE" id="PS50084">
    <property type="entry name" value="KH_TYPE_1"/>
    <property type="match status" value="2"/>
</dbReference>
<accession>Q7ZTQ5</accession>
<name>FXR1B_XENLA</name>
<reference evidence="9" key="1">
    <citation type="submission" date="2003-01" db="EMBL/GenBank/DDBJ databases">
        <authorList>
            <consortium name="NIH - Xenopus Gene Collection (XGC) project"/>
        </authorList>
    </citation>
    <scope>NUCLEOTIDE SEQUENCE [LARGE SCALE MRNA]</scope>
    <source>
        <tissue evidence="9">Embryo</tissue>
    </source>
</reference>
<keyword id="KW-0963">Cytoplasm</keyword>
<keyword id="KW-0217">Developmental protein</keyword>
<keyword id="KW-0221">Differentiation</keyword>
<keyword id="KW-0517">Myogenesis</keyword>
<keyword id="KW-1185">Reference proteome</keyword>
<keyword id="KW-0677">Repeat</keyword>
<keyword id="KW-0694">RNA-binding</keyword>
<comment type="function">
    <text evidence="1 2 3">mRNA-binding protein that acts as a regulator of mRNAs translation and/or stability, and which is required for various processes, such as neurogenesis and muscle development (By similarity). Specifically binds to AU-rich elements (AREs) in the 3'-UTR of target mRNAs (By similarity). Promotes formation of some phase-separated membraneless compartment by undergoing liquid-liquid phase separation upon binding to AREs-containing mRNAs, leading to assemble mRNAs into cytoplasmic ribonucleoprotein granules that concentrate mRNAs with associated regulatory factors (By similarity). Required for embryonic and postnatal development of muscle tissue by undergoing liquid-liquid phase separation to assemble target mRNAs into cytoplasmic ribonucleoprotein granules (By similarity). Forms a cytoplasmic messenger ribonucleoprotein (mRNP) network by packaging long mRNAs, serving as a scaffold that recruits proteins and signaling molecules. This network facilitates signaling reactions by maintaining proximity between kinases and substrates, crucial for processes like actomyosin reorganization (By similarity).</text>
</comment>
<comment type="subcellular location">
    <subcellularLocation>
        <location evidence="3">Cytoplasm</location>
        <location evidence="3">Cytoplasmic ribonucleoprotein granule</location>
    </subcellularLocation>
    <subcellularLocation>
        <location evidence="1">Cytoplasm</location>
        <location evidence="1">Stress granule</location>
    </subcellularLocation>
    <subcellularLocation>
        <location evidence="2">Cytoplasm</location>
    </subcellularLocation>
    <text evidence="3">Specifically localizes to cytoplasmic ribonucleoprotein membraneless compartments.</text>
</comment>
<comment type="domain">
    <text evidence="3">Disordered region at the C-terminus undergoes liquid-liquid phase separation (LLPS) for the formation of a membraneless compartment that stores mRNAs.</text>
</comment>
<comment type="domain">
    <text evidence="1">CC1 and CC2 domains are required for homodimerization and FXR1-network nucleation. CC domains also mediate interaction with other proteins containing similar CC domains.</text>
</comment>
<comment type="similarity">
    <text evidence="8">Belongs to the FMR1 family.</text>
</comment>
<gene>
    <name type="primary">fxr1-b</name>
    <name type="synonym">fxr1h</name>
</gene>
<proteinExistence type="evidence at transcript level"/>
<feature type="chain" id="PRO_0000245324" description="RNA-binding protein fxr1-B">
    <location>
        <begin position="1"/>
        <end position="675"/>
    </location>
</feature>
<feature type="domain" description="Agenet-like 1" evidence="6">
    <location>
        <begin position="4"/>
        <end position="50"/>
    </location>
</feature>
<feature type="domain" description="Agenet-like 2" evidence="6">
    <location>
        <begin position="63"/>
        <end position="115"/>
    </location>
</feature>
<feature type="domain" description="KH 1" evidence="5">
    <location>
        <begin position="222"/>
        <end position="251"/>
    </location>
</feature>
<feature type="domain" description="KH 2" evidence="5">
    <location>
        <begin position="285"/>
        <end position="314"/>
    </location>
</feature>
<feature type="region of interest" description="CC1 domain" evidence="1">
    <location>
        <begin position="201"/>
        <end position="208"/>
    </location>
</feature>
<feature type="region of interest" description="CC2 domain" evidence="1">
    <location>
        <begin position="353"/>
        <end position="379"/>
    </location>
</feature>
<feature type="region of interest" description="Disordered" evidence="7">
    <location>
        <begin position="381"/>
        <end position="675"/>
    </location>
</feature>
<feature type="region of interest" description="RNA-binding RGG-box" evidence="4">
    <location>
        <begin position="470"/>
        <end position="485"/>
    </location>
</feature>
<feature type="compositionally biased region" description="Low complexity" evidence="7">
    <location>
        <begin position="403"/>
        <end position="413"/>
    </location>
</feature>
<feature type="compositionally biased region" description="Low complexity" evidence="7">
    <location>
        <begin position="429"/>
        <end position="438"/>
    </location>
</feature>
<feature type="compositionally biased region" description="Gly residues" evidence="7">
    <location>
        <begin position="473"/>
        <end position="488"/>
    </location>
</feature>
<feature type="compositionally biased region" description="Acidic residues" evidence="7">
    <location>
        <begin position="511"/>
        <end position="521"/>
    </location>
</feature>
<feature type="compositionally biased region" description="Basic residues" evidence="7">
    <location>
        <begin position="527"/>
        <end position="537"/>
    </location>
</feature>
<feature type="compositionally biased region" description="Basic residues" evidence="7">
    <location>
        <begin position="570"/>
        <end position="581"/>
    </location>
</feature>
<feature type="compositionally biased region" description="Basic and acidic residues" evidence="7">
    <location>
        <begin position="608"/>
        <end position="631"/>
    </location>
</feature>
<feature type="compositionally biased region" description="Polar residues" evidence="7">
    <location>
        <begin position="649"/>
        <end position="664"/>
    </location>
</feature>
<evidence type="ECO:0000250" key="1">
    <source>
        <dbReference type="UniProtKB" id="P51114"/>
    </source>
</evidence>
<evidence type="ECO:0000250" key="2">
    <source>
        <dbReference type="UniProtKB" id="Q5BJ56"/>
    </source>
</evidence>
<evidence type="ECO:0000250" key="3">
    <source>
        <dbReference type="UniProtKB" id="Q61584"/>
    </source>
</evidence>
<evidence type="ECO:0000255" key="4"/>
<evidence type="ECO:0000255" key="5">
    <source>
        <dbReference type="PROSITE-ProRule" id="PRU00117"/>
    </source>
</evidence>
<evidence type="ECO:0000255" key="6">
    <source>
        <dbReference type="PROSITE-ProRule" id="PRU00973"/>
    </source>
</evidence>
<evidence type="ECO:0000256" key="7">
    <source>
        <dbReference type="SAM" id="MobiDB-lite"/>
    </source>
</evidence>
<evidence type="ECO:0000305" key="8"/>
<evidence type="ECO:0000312" key="9">
    <source>
        <dbReference type="EMBL" id="AAH43638.1"/>
    </source>
</evidence>
<protein>
    <recommendedName>
        <fullName evidence="8">RNA-binding protein fxr1-B</fullName>
    </recommendedName>
    <alternativeName>
        <fullName>xFxr1p-B</fullName>
    </alternativeName>
</protein>
<organism>
    <name type="scientific">Xenopus laevis</name>
    <name type="common">African clawed frog</name>
    <dbReference type="NCBI Taxonomy" id="8355"/>
    <lineage>
        <taxon>Eukaryota</taxon>
        <taxon>Metazoa</taxon>
        <taxon>Chordata</taxon>
        <taxon>Craniata</taxon>
        <taxon>Vertebrata</taxon>
        <taxon>Euteleostomi</taxon>
        <taxon>Amphibia</taxon>
        <taxon>Batrachia</taxon>
        <taxon>Anura</taxon>
        <taxon>Pipoidea</taxon>
        <taxon>Pipidae</taxon>
        <taxon>Xenopodinae</taxon>
        <taxon>Xenopus</taxon>
        <taxon>Xenopus</taxon>
    </lineage>
</organism>
<sequence length="675" mass="76212">MEDLTVEVRGSNGAFYKGFIKDVHEDSLTVVFENNWQPERQVPFNEVRMPPLPDIKKEITEGDEVEVYSRANDQEPCGWWLAKVRMMKGEFYVIEYAACDATYNEIVTFERLRPVNQNKSVTKNSFFKCTVDVPEDLRESCSNENVHKEFKKAVGACRVYFHAETNQLIILSASESTVKRVNILSDMHLRSIRTKLMLMSRNEEATKHLECTKQLASAFHEEFDVREDLMGLAIGTHGSNIQQARKVPGITAIELDEDSGTFRIYGESEEAVKKARSYLEFVEDFIQVPRNLVGKVIGKNGKVIQEIVDKSGVVRVRIEGDNETKLPREDGMVPFVFVGTKENIGNVQVLLEYHIAYLKEVEQLRMERLQIDEQLRQIGMGFRPSSRGTEKEKGYVTDESAASSVRGSRSYSGRGRGRRGPNYTSGYGTNSELSNTSETESERKEELSDWSLAGEDEREGRQQRDSRRRPGGRGRSGSAGRGRGGSRGGKSSISSVLKDPDSNPYSLLDNTESDQTADTDASDSHHNANRRRRSRRRRTDEDSSLMDGMTESDNASVNENGLDDSEQKPQRRNRSRRRRFRGQAEDRQPVTVADYISRAESQSRQRNLPKETLENGKKEKVKDVIEEHGPSEKVINGPRATSADRALKPQTTPTERNNASCQDGSKQEAILNGVS</sequence>